<organism>
    <name type="scientific">Francisella tularensis subsp. holarctica (strain FTNF002-00 / FTA)</name>
    <dbReference type="NCBI Taxonomy" id="458234"/>
    <lineage>
        <taxon>Bacteria</taxon>
        <taxon>Pseudomonadati</taxon>
        <taxon>Pseudomonadota</taxon>
        <taxon>Gammaproteobacteria</taxon>
        <taxon>Thiotrichales</taxon>
        <taxon>Francisellaceae</taxon>
        <taxon>Francisella</taxon>
    </lineage>
</organism>
<accession>A7NAP6</accession>
<reference key="1">
    <citation type="journal article" date="2009" name="PLoS ONE">
        <title>Complete genome sequence of Francisella tularensis subspecies holarctica FTNF002-00.</title>
        <authorList>
            <person name="Barabote R.D."/>
            <person name="Xie G."/>
            <person name="Brettin T.S."/>
            <person name="Hinrichs S.H."/>
            <person name="Fey P.D."/>
            <person name="Jay J.J."/>
            <person name="Engle J.L."/>
            <person name="Godbole S.D."/>
            <person name="Noronha J.M."/>
            <person name="Scheuermann R.H."/>
            <person name="Zhou L.W."/>
            <person name="Lion C."/>
            <person name="Dempsey M.P."/>
        </authorList>
    </citation>
    <scope>NUCLEOTIDE SEQUENCE [LARGE SCALE GENOMIC DNA]</scope>
    <source>
        <strain>FTNF002-00 / FTA</strain>
    </source>
</reference>
<evidence type="ECO:0000255" key="1">
    <source>
        <dbReference type="HAMAP-Rule" id="MF_00392"/>
    </source>
</evidence>
<name>LPXB_FRATF</name>
<comment type="function">
    <text evidence="1">Condensation of UDP-2,3-diacylglucosamine and 2,3-diacylglucosamine-1-phosphate to form lipid A disaccharide, a precursor of lipid A, a phosphorylated glycolipid that anchors the lipopolysaccharide to the outer membrane of the cell.</text>
</comment>
<comment type="catalytic activity">
    <reaction evidence="1">
        <text>a lipid X + a UDP-2-N,3-O-bis[(3R)-3-hydroxyacyl]-alpha-D-glucosamine = a lipid A disaccharide + UDP + H(+)</text>
        <dbReference type="Rhea" id="RHEA:67828"/>
        <dbReference type="ChEBI" id="CHEBI:15378"/>
        <dbReference type="ChEBI" id="CHEBI:58223"/>
        <dbReference type="ChEBI" id="CHEBI:137748"/>
        <dbReference type="ChEBI" id="CHEBI:176338"/>
        <dbReference type="ChEBI" id="CHEBI:176343"/>
        <dbReference type="EC" id="2.4.1.182"/>
    </reaction>
</comment>
<comment type="pathway">
    <text evidence="1">Bacterial outer membrane biogenesis; LPS lipid A biosynthesis.</text>
</comment>
<comment type="similarity">
    <text evidence="1">Belongs to the LpxB family.</text>
</comment>
<protein>
    <recommendedName>
        <fullName evidence="1">Lipid-A-disaccharide synthase</fullName>
        <ecNumber evidence="1">2.4.1.182</ecNumber>
    </recommendedName>
</protein>
<feature type="chain" id="PRO_1000049396" description="Lipid-A-disaccharide synthase">
    <location>
        <begin position="1"/>
        <end position="380"/>
    </location>
</feature>
<dbReference type="EC" id="2.4.1.182" evidence="1"/>
<dbReference type="EMBL" id="CP000803">
    <property type="protein sequence ID" value="ABU61049.1"/>
    <property type="molecule type" value="Genomic_DNA"/>
</dbReference>
<dbReference type="RefSeq" id="WP_003014884.1">
    <property type="nucleotide sequence ID" value="NC_009749.1"/>
</dbReference>
<dbReference type="SMR" id="A7NAP6"/>
<dbReference type="CAZy" id="GT19">
    <property type="family name" value="Glycosyltransferase Family 19"/>
</dbReference>
<dbReference type="KEGG" id="fta:FTA_0573"/>
<dbReference type="HOGENOM" id="CLU_036577_3_0_6"/>
<dbReference type="UniPathway" id="UPA00973"/>
<dbReference type="GO" id="GO:0016020">
    <property type="term" value="C:membrane"/>
    <property type="evidence" value="ECO:0007669"/>
    <property type="project" value="GOC"/>
</dbReference>
<dbReference type="GO" id="GO:0008915">
    <property type="term" value="F:lipid-A-disaccharide synthase activity"/>
    <property type="evidence" value="ECO:0007669"/>
    <property type="project" value="UniProtKB-UniRule"/>
</dbReference>
<dbReference type="GO" id="GO:0005543">
    <property type="term" value="F:phospholipid binding"/>
    <property type="evidence" value="ECO:0007669"/>
    <property type="project" value="TreeGrafter"/>
</dbReference>
<dbReference type="GO" id="GO:0009245">
    <property type="term" value="P:lipid A biosynthetic process"/>
    <property type="evidence" value="ECO:0007669"/>
    <property type="project" value="UniProtKB-UniRule"/>
</dbReference>
<dbReference type="CDD" id="cd01635">
    <property type="entry name" value="Glycosyltransferase_GTB-type"/>
    <property type="match status" value="1"/>
</dbReference>
<dbReference type="Gene3D" id="3.40.50.2000">
    <property type="entry name" value="Glycogen Phosphorylase B"/>
    <property type="match status" value="2"/>
</dbReference>
<dbReference type="HAMAP" id="MF_00392">
    <property type="entry name" value="LpxB"/>
    <property type="match status" value="1"/>
</dbReference>
<dbReference type="InterPro" id="IPR003835">
    <property type="entry name" value="Glyco_trans_19"/>
</dbReference>
<dbReference type="NCBIfam" id="TIGR00215">
    <property type="entry name" value="lpxB"/>
    <property type="match status" value="1"/>
</dbReference>
<dbReference type="PANTHER" id="PTHR30372">
    <property type="entry name" value="LIPID-A-DISACCHARIDE SYNTHASE"/>
    <property type="match status" value="1"/>
</dbReference>
<dbReference type="PANTHER" id="PTHR30372:SF4">
    <property type="entry name" value="LIPID-A-DISACCHARIDE SYNTHASE, MITOCHONDRIAL-RELATED"/>
    <property type="match status" value="1"/>
</dbReference>
<dbReference type="Pfam" id="PF02684">
    <property type="entry name" value="LpxB"/>
    <property type="match status" value="1"/>
</dbReference>
<dbReference type="SUPFAM" id="SSF53756">
    <property type="entry name" value="UDP-Glycosyltransferase/glycogen phosphorylase"/>
    <property type="match status" value="1"/>
</dbReference>
<proteinExistence type="inferred from homology"/>
<gene>
    <name evidence="1" type="primary">lpxB</name>
    <name type="ordered locus">FTA_0573</name>
</gene>
<sequence>MRIGIVAGELSGDQLGGTLVEALKQKYPNAIIEGIGGPKMAAAGFKSLYPMDALSLIGFLEIISKGLRILSIRRKIINYFKQNKPDIFIGIDAPDFNLTVEKELRSAGIKTIHYVSPKIWVWREYRIKKIRKATDKILAILPFETEYYKNRHKFEAIYVGHPLAKNIPIHIDRAKYRDKLGLKGSSLPILSVLPGSRTTEVSRLLPLFLLALQKLVDAGYKFKAIMPLAKPSLKPLFAKYKEQIDSLGIEVFETNSHDVLKASDLSLLASGTATLEAMLCKLPMVVGYKLSWLSALIGRMLIGNHSYWAFPNILHKNEIIKELIQEDCTVDNLFSELKRLFDDKRRNDYIVEEFEKIHKEMVIDTESKIIQVLDTMIEKS</sequence>
<keyword id="KW-0328">Glycosyltransferase</keyword>
<keyword id="KW-0441">Lipid A biosynthesis</keyword>
<keyword id="KW-0444">Lipid biosynthesis</keyword>
<keyword id="KW-0443">Lipid metabolism</keyword>
<keyword id="KW-0808">Transferase</keyword>